<proteinExistence type="evidence at transcript level"/>
<geneLocation type="chloroplast"/>
<accession>Q85A01</accession>
<feature type="chain" id="PRO_0000175439" description="DNA-directed RNA polymerase subunit alpha">
    <location>
        <begin position="1"/>
        <end position="340"/>
    </location>
</feature>
<feature type="region of interest" description="Alpha N-terminal domain (alpha-NTD)" evidence="1">
    <location>
        <begin position="1"/>
        <end position="233"/>
    </location>
</feature>
<feature type="region of interest" description="Alpha C-terminal domain (alpha-CTD)" evidence="1">
    <location>
        <begin position="263"/>
        <end position="340"/>
    </location>
</feature>
<comment type="function">
    <text evidence="1">DNA-dependent RNA polymerase catalyzes the transcription of DNA into RNA using the four ribonucleoside triphosphates as substrates.</text>
</comment>
<comment type="catalytic activity">
    <reaction>
        <text>RNA(n) + a ribonucleoside 5'-triphosphate = RNA(n+1) + diphosphate</text>
        <dbReference type="Rhea" id="RHEA:21248"/>
        <dbReference type="Rhea" id="RHEA-COMP:14527"/>
        <dbReference type="Rhea" id="RHEA-COMP:17342"/>
        <dbReference type="ChEBI" id="CHEBI:33019"/>
        <dbReference type="ChEBI" id="CHEBI:61557"/>
        <dbReference type="ChEBI" id="CHEBI:140395"/>
        <dbReference type="EC" id="2.7.7.6"/>
    </reaction>
</comment>
<comment type="subunit">
    <text evidence="1">In plastids the minimal PEP RNA polymerase catalytic core is composed of four subunits: alpha, beta, beta', and beta''. When a (nuclear-encoded) sigma factor is associated with the core the holoenzyme is formed, which can initiate transcription (By similarity).</text>
</comment>
<comment type="subcellular location">
    <subcellularLocation>
        <location>Plastid</location>
        <location>Chloroplast</location>
    </subcellularLocation>
</comment>
<comment type="domain">
    <text evidence="1">The N-terminal domain is essential for RNAP assembly and basal transcription, whereas the C-terminal domain is involved in interaction with transcriptional regulators and with upstream promoter elements.</text>
</comment>
<comment type="RNA editing">
    <location>
        <position position="31" evidence="2 3"/>
    </location>
    <location>
        <position position="35" evidence="2 3"/>
    </location>
    <location>
        <position position="51" evidence="2 3"/>
    </location>
    <location>
        <position position="53" evidence="2 3"/>
    </location>
    <location>
        <position position="88" evidence="2 3"/>
    </location>
    <location>
        <position position="96" evidence="2 3"/>
    </location>
    <location>
        <position position="104" evidence="2 3"/>
    </location>
    <location>
        <position position="170" evidence="2 3"/>
    </location>
    <location>
        <position position="176" evidence="2 3"/>
    </location>
    <location>
        <position position="196" evidence="2 3"/>
    </location>
    <location>
        <position position="209" evidence="2 3"/>
    </location>
    <location>
        <position position="211" evidence="2 3"/>
    </location>
    <location>
        <position position="225" evidence="2 3"/>
    </location>
    <location>
        <position position="226" evidence="2 3"/>
    </location>
    <location>
        <position position="297" evidence="2 3"/>
    </location>
    <location>
        <position position="298" evidence="2 3"/>
    </location>
    <text>The nonsense codons at positions 51, 104 and 196, are modified to sense codons.</text>
</comment>
<comment type="similarity">
    <text evidence="4">Belongs to the RNA polymerase alpha chain family.</text>
</comment>
<name>RPOA_ANTAG</name>
<reference key="1">
    <citation type="journal article" date="2003" name="Nucleic Acids Res.">
        <title>The complete nucleotide sequence of the hornwort (Anthoceros formosae) chloroplast genome: insight into the earliest land plants.</title>
        <authorList>
            <person name="Kugita M."/>
            <person name="Kaneko A."/>
            <person name="Yamamoto Y."/>
            <person name="Takeya Y."/>
            <person name="Matsumoto T."/>
            <person name="Yoshinaga K."/>
        </authorList>
    </citation>
    <scope>NUCLEOTIDE SEQUENCE [LARGE SCALE GENOMIC DNA]</scope>
    <scope>RNA EDITING</scope>
</reference>
<reference key="2">
    <citation type="journal article" date="2003" name="Nucleic Acids Res.">
        <title>RNA editing in hornwort chloroplasts makes more than half the genes functional.</title>
        <authorList>
            <person name="Kugita M."/>
            <person name="Yamamoto Y."/>
            <person name="Fujikawa T."/>
            <person name="Matsumoto T."/>
            <person name="Yoshinaga K."/>
        </authorList>
    </citation>
    <scope>NUCLEOTIDE SEQUENCE [MRNA]</scope>
    <scope>RNA EDITING</scope>
    <source>
        <tissue>Thallus</tissue>
    </source>
</reference>
<gene>
    <name type="primary">rpoA</name>
</gene>
<sequence>MIQNEIPIPAEALQWKCIESKIDSERLHYGRFAISPLRPGQANTVGIAIRRALLGEIEGTCITYVKFEKVTHEYSTIMGIQESVHDILINLKEIVLKSNSYKTQEASISILGPKRVTAEDIVLPSSVEVIDATQHIATITKAVYFNIKLGIRKDRGYRIENPVKYEDGNFAVNAAFTPIRNANYSVHSFENEKEKQEILFIEVWTNGSLTPKEALREASQSLINLFIPLLHEKKERENRKLENKDEYNVLRSCFSLTNIGEVRKEISFKHIFIDQLELPARAYNGLKKVDVHTISDLLNYSQEDLMKIKNFGKKSIQQVVEALQKHFAIHLPKNKFSIND</sequence>
<protein>
    <recommendedName>
        <fullName>DNA-directed RNA polymerase subunit alpha</fullName>
        <shortName>PEP</shortName>
        <ecNumber>2.7.7.6</ecNumber>
    </recommendedName>
    <alternativeName>
        <fullName>Plastid-encoded RNA polymerase subunit alpha</fullName>
        <shortName>RNA polymerase subunit alpha</shortName>
    </alternativeName>
</protein>
<evidence type="ECO:0000250" key="1"/>
<evidence type="ECO:0000269" key="2">
    <source>
    </source>
</evidence>
<evidence type="ECO:0000269" key="3">
    <source>
    </source>
</evidence>
<evidence type="ECO:0000305" key="4"/>
<organism>
    <name type="scientific">Anthoceros angustus</name>
    <name type="common">Hornwort</name>
    <name type="synonym">Anthoceros formosae</name>
    <dbReference type="NCBI Taxonomy" id="48387"/>
    <lineage>
        <taxon>Eukaryota</taxon>
        <taxon>Viridiplantae</taxon>
        <taxon>Streptophyta</taxon>
        <taxon>Embryophyta</taxon>
        <taxon>Anthocerotophyta</taxon>
        <taxon>Anthocerotopsida</taxon>
        <taxon>Anthocerotidae</taxon>
        <taxon>Anthocerotales</taxon>
        <taxon>Anthocerotaceae</taxon>
        <taxon>Anthoceros</taxon>
    </lineage>
</organism>
<dbReference type="EC" id="2.7.7.6"/>
<dbReference type="EMBL" id="AB086179">
    <property type="protein sequence ID" value="BAC55381.1"/>
    <property type="molecule type" value="Genomic_DNA"/>
</dbReference>
<dbReference type="EMBL" id="AB087466">
    <property type="protein sequence ID" value="BAC55478.1"/>
    <property type="molecule type" value="mRNA"/>
</dbReference>
<dbReference type="RefSeq" id="NP_777445.1">
    <property type="nucleotide sequence ID" value="NC_004543.1"/>
</dbReference>
<dbReference type="SMR" id="Q85A01"/>
<dbReference type="GeneID" id="2553422"/>
<dbReference type="GO" id="GO:0009507">
    <property type="term" value="C:chloroplast"/>
    <property type="evidence" value="ECO:0007669"/>
    <property type="project" value="UniProtKB-SubCell"/>
</dbReference>
<dbReference type="GO" id="GO:0000428">
    <property type="term" value="C:DNA-directed RNA polymerase complex"/>
    <property type="evidence" value="ECO:0007669"/>
    <property type="project" value="UniProtKB-KW"/>
</dbReference>
<dbReference type="GO" id="GO:0005739">
    <property type="term" value="C:mitochondrion"/>
    <property type="evidence" value="ECO:0007669"/>
    <property type="project" value="GOC"/>
</dbReference>
<dbReference type="GO" id="GO:0003677">
    <property type="term" value="F:DNA binding"/>
    <property type="evidence" value="ECO:0007669"/>
    <property type="project" value="UniProtKB-UniRule"/>
</dbReference>
<dbReference type="GO" id="GO:0003899">
    <property type="term" value="F:DNA-directed RNA polymerase activity"/>
    <property type="evidence" value="ECO:0007669"/>
    <property type="project" value="UniProtKB-UniRule"/>
</dbReference>
<dbReference type="GO" id="GO:0046983">
    <property type="term" value="F:protein dimerization activity"/>
    <property type="evidence" value="ECO:0007669"/>
    <property type="project" value="InterPro"/>
</dbReference>
<dbReference type="GO" id="GO:0006351">
    <property type="term" value="P:DNA-templated transcription"/>
    <property type="evidence" value="ECO:0007669"/>
    <property type="project" value="UniProtKB-UniRule"/>
</dbReference>
<dbReference type="CDD" id="cd06928">
    <property type="entry name" value="RNAP_alpha_NTD"/>
    <property type="match status" value="1"/>
</dbReference>
<dbReference type="FunFam" id="2.170.120.12:FF:000001">
    <property type="entry name" value="DNA-directed RNA polymerase subunit alpha"/>
    <property type="match status" value="1"/>
</dbReference>
<dbReference type="Gene3D" id="1.10.150.20">
    <property type="entry name" value="5' to 3' exonuclease, C-terminal subdomain"/>
    <property type="match status" value="1"/>
</dbReference>
<dbReference type="Gene3D" id="2.170.120.12">
    <property type="entry name" value="DNA-directed RNA polymerase, insert domain"/>
    <property type="match status" value="1"/>
</dbReference>
<dbReference type="Gene3D" id="3.30.1360.10">
    <property type="entry name" value="RNA polymerase, RBP11-like subunit"/>
    <property type="match status" value="1"/>
</dbReference>
<dbReference type="HAMAP" id="MF_00059">
    <property type="entry name" value="RNApol_bact_RpoA"/>
    <property type="match status" value="1"/>
</dbReference>
<dbReference type="InterPro" id="IPR011262">
    <property type="entry name" value="DNA-dir_RNA_pol_insert"/>
</dbReference>
<dbReference type="InterPro" id="IPR011263">
    <property type="entry name" value="DNA-dir_RNA_pol_RpoA/D/Rpb3"/>
</dbReference>
<dbReference type="InterPro" id="IPR011773">
    <property type="entry name" value="DNA-dir_RpoA"/>
</dbReference>
<dbReference type="InterPro" id="IPR036603">
    <property type="entry name" value="RBP11-like"/>
</dbReference>
<dbReference type="InterPro" id="IPR011260">
    <property type="entry name" value="RNAP_asu_C"/>
</dbReference>
<dbReference type="InterPro" id="IPR036643">
    <property type="entry name" value="RNApol_insert_sf"/>
</dbReference>
<dbReference type="NCBIfam" id="TIGR02027">
    <property type="entry name" value="rpoA"/>
    <property type="match status" value="1"/>
</dbReference>
<dbReference type="Pfam" id="PF01000">
    <property type="entry name" value="RNA_pol_A_bac"/>
    <property type="match status" value="1"/>
</dbReference>
<dbReference type="Pfam" id="PF03118">
    <property type="entry name" value="RNA_pol_A_CTD"/>
    <property type="match status" value="1"/>
</dbReference>
<dbReference type="Pfam" id="PF01193">
    <property type="entry name" value="RNA_pol_L"/>
    <property type="match status" value="1"/>
</dbReference>
<dbReference type="SMART" id="SM00662">
    <property type="entry name" value="RPOLD"/>
    <property type="match status" value="1"/>
</dbReference>
<dbReference type="SUPFAM" id="SSF47789">
    <property type="entry name" value="C-terminal domain of RNA polymerase alpha subunit"/>
    <property type="match status" value="1"/>
</dbReference>
<dbReference type="SUPFAM" id="SSF56553">
    <property type="entry name" value="Insert subdomain of RNA polymerase alpha subunit"/>
    <property type="match status" value="1"/>
</dbReference>
<dbReference type="SUPFAM" id="SSF55257">
    <property type="entry name" value="RBP11-like subunits of RNA polymerase"/>
    <property type="match status" value="1"/>
</dbReference>
<keyword id="KW-0150">Chloroplast</keyword>
<keyword id="KW-0240">DNA-directed RNA polymerase</keyword>
<keyword id="KW-0548">Nucleotidyltransferase</keyword>
<keyword id="KW-0934">Plastid</keyword>
<keyword id="KW-0691">RNA editing</keyword>
<keyword id="KW-0804">Transcription</keyword>
<keyword id="KW-0808">Transferase</keyword>